<accession>B0SCE2</accession>
<name>SERC_LEPBA</name>
<feature type="chain" id="PRO_1000097216" description="Phosphoserine aminotransferase">
    <location>
        <begin position="1"/>
        <end position="365"/>
    </location>
</feature>
<feature type="binding site" evidence="1">
    <location>
        <position position="46"/>
    </location>
    <ligand>
        <name>L-glutamate</name>
        <dbReference type="ChEBI" id="CHEBI:29985"/>
    </ligand>
</feature>
<feature type="binding site" evidence="1">
    <location>
        <begin position="80"/>
        <end position="81"/>
    </location>
    <ligand>
        <name>pyridoxal 5'-phosphate</name>
        <dbReference type="ChEBI" id="CHEBI:597326"/>
    </ligand>
</feature>
<feature type="binding site" evidence="1">
    <location>
        <position position="106"/>
    </location>
    <ligand>
        <name>pyridoxal 5'-phosphate</name>
        <dbReference type="ChEBI" id="CHEBI:597326"/>
    </ligand>
</feature>
<feature type="binding site" evidence="1">
    <location>
        <position position="157"/>
    </location>
    <ligand>
        <name>pyridoxal 5'-phosphate</name>
        <dbReference type="ChEBI" id="CHEBI:597326"/>
    </ligand>
</feature>
<feature type="binding site" evidence="1">
    <location>
        <position position="177"/>
    </location>
    <ligand>
        <name>pyridoxal 5'-phosphate</name>
        <dbReference type="ChEBI" id="CHEBI:597326"/>
    </ligand>
</feature>
<feature type="binding site" evidence="1">
    <location>
        <position position="200"/>
    </location>
    <ligand>
        <name>pyridoxal 5'-phosphate</name>
        <dbReference type="ChEBI" id="CHEBI:597326"/>
    </ligand>
</feature>
<feature type="binding site" evidence="1">
    <location>
        <begin position="242"/>
        <end position="243"/>
    </location>
    <ligand>
        <name>pyridoxal 5'-phosphate</name>
        <dbReference type="ChEBI" id="CHEBI:597326"/>
    </ligand>
</feature>
<feature type="modified residue" description="N6-(pyridoxal phosphate)lysine" evidence="1">
    <location>
        <position position="201"/>
    </location>
</feature>
<comment type="function">
    <text evidence="1">Catalyzes the reversible conversion of 3-phosphohydroxypyruvate to phosphoserine and of 3-hydroxy-2-oxo-4-phosphonooxybutanoate to phosphohydroxythreonine.</text>
</comment>
<comment type="catalytic activity">
    <reaction evidence="1">
        <text>O-phospho-L-serine + 2-oxoglutarate = 3-phosphooxypyruvate + L-glutamate</text>
        <dbReference type="Rhea" id="RHEA:14329"/>
        <dbReference type="ChEBI" id="CHEBI:16810"/>
        <dbReference type="ChEBI" id="CHEBI:18110"/>
        <dbReference type="ChEBI" id="CHEBI:29985"/>
        <dbReference type="ChEBI" id="CHEBI:57524"/>
        <dbReference type="EC" id="2.6.1.52"/>
    </reaction>
</comment>
<comment type="catalytic activity">
    <reaction evidence="1">
        <text>4-(phosphooxy)-L-threonine + 2-oxoglutarate = (R)-3-hydroxy-2-oxo-4-phosphooxybutanoate + L-glutamate</text>
        <dbReference type="Rhea" id="RHEA:16573"/>
        <dbReference type="ChEBI" id="CHEBI:16810"/>
        <dbReference type="ChEBI" id="CHEBI:29985"/>
        <dbReference type="ChEBI" id="CHEBI:58452"/>
        <dbReference type="ChEBI" id="CHEBI:58538"/>
        <dbReference type="EC" id="2.6.1.52"/>
    </reaction>
</comment>
<comment type="cofactor">
    <cofactor evidence="1">
        <name>pyridoxal 5'-phosphate</name>
        <dbReference type="ChEBI" id="CHEBI:597326"/>
    </cofactor>
    <text evidence="1">Binds 1 pyridoxal phosphate per subunit.</text>
</comment>
<comment type="pathway">
    <text evidence="1">Amino-acid biosynthesis; L-serine biosynthesis; L-serine from 3-phospho-D-glycerate: step 2/3.</text>
</comment>
<comment type="pathway">
    <text evidence="1">Cofactor biosynthesis; pyridoxine 5'-phosphate biosynthesis; pyridoxine 5'-phosphate from D-erythrose 4-phosphate: step 3/5.</text>
</comment>
<comment type="subunit">
    <text evidence="1">Homodimer.</text>
</comment>
<comment type="subcellular location">
    <subcellularLocation>
        <location evidence="1">Cytoplasm</location>
    </subcellularLocation>
</comment>
<comment type="similarity">
    <text evidence="1">Belongs to the class-V pyridoxal-phosphate-dependent aminotransferase family. SerC subfamily.</text>
</comment>
<evidence type="ECO:0000255" key="1">
    <source>
        <dbReference type="HAMAP-Rule" id="MF_00160"/>
    </source>
</evidence>
<proteinExistence type="inferred from homology"/>
<dbReference type="EC" id="2.6.1.52" evidence="1"/>
<dbReference type="EMBL" id="CP000777">
    <property type="protein sequence ID" value="ABZ94789.1"/>
    <property type="molecule type" value="Genomic_DNA"/>
</dbReference>
<dbReference type="RefSeq" id="WP_012389321.1">
    <property type="nucleotide sequence ID" value="NC_010842.1"/>
</dbReference>
<dbReference type="SMR" id="B0SCE2"/>
<dbReference type="KEGG" id="lbf:LBF_2298"/>
<dbReference type="HOGENOM" id="CLU_034866_0_2_12"/>
<dbReference type="UniPathway" id="UPA00135">
    <property type="reaction ID" value="UER00197"/>
</dbReference>
<dbReference type="UniPathway" id="UPA00244">
    <property type="reaction ID" value="UER00311"/>
</dbReference>
<dbReference type="GO" id="GO:0005737">
    <property type="term" value="C:cytoplasm"/>
    <property type="evidence" value="ECO:0007669"/>
    <property type="project" value="UniProtKB-SubCell"/>
</dbReference>
<dbReference type="GO" id="GO:0004648">
    <property type="term" value="F:O-phospho-L-serine:2-oxoglutarate aminotransferase activity"/>
    <property type="evidence" value="ECO:0007669"/>
    <property type="project" value="UniProtKB-UniRule"/>
</dbReference>
<dbReference type="GO" id="GO:0030170">
    <property type="term" value="F:pyridoxal phosphate binding"/>
    <property type="evidence" value="ECO:0007669"/>
    <property type="project" value="UniProtKB-UniRule"/>
</dbReference>
<dbReference type="GO" id="GO:0006564">
    <property type="term" value="P:L-serine biosynthetic process"/>
    <property type="evidence" value="ECO:0007669"/>
    <property type="project" value="UniProtKB-UniRule"/>
</dbReference>
<dbReference type="GO" id="GO:0008615">
    <property type="term" value="P:pyridoxine biosynthetic process"/>
    <property type="evidence" value="ECO:0007669"/>
    <property type="project" value="UniProtKB-UniRule"/>
</dbReference>
<dbReference type="FunFam" id="3.40.640.10:FF:000010">
    <property type="entry name" value="Phosphoserine aminotransferase"/>
    <property type="match status" value="1"/>
</dbReference>
<dbReference type="FunFam" id="3.90.1150.10:FF:000006">
    <property type="entry name" value="Phosphoserine aminotransferase"/>
    <property type="match status" value="1"/>
</dbReference>
<dbReference type="Gene3D" id="3.90.1150.10">
    <property type="entry name" value="Aspartate Aminotransferase, domain 1"/>
    <property type="match status" value="1"/>
</dbReference>
<dbReference type="Gene3D" id="3.40.640.10">
    <property type="entry name" value="Type I PLP-dependent aspartate aminotransferase-like (Major domain)"/>
    <property type="match status" value="1"/>
</dbReference>
<dbReference type="HAMAP" id="MF_00160">
    <property type="entry name" value="SerC_aminotrans_5"/>
    <property type="match status" value="1"/>
</dbReference>
<dbReference type="InterPro" id="IPR000192">
    <property type="entry name" value="Aminotrans_V_dom"/>
</dbReference>
<dbReference type="InterPro" id="IPR022278">
    <property type="entry name" value="Pser_aminoTfrase"/>
</dbReference>
<dbReference type="InterPro" id="IPR015424">
    <property type="entry name" value="PyrdxlP-dep_Trfase"/>
</dbReference>
<dbReference type="InterPro" id="IPR015421">
    <property type="entry name" value="PyrdxlP-dep_Trfase_major"/>
</dbReference>
<dbReference type="InterPro" id="IPR015422">
    <property type="entry name" value="PyrdxlP-dep_Trfase_small"/>
</dbReference>
<dbReference type="NCBIfam" id="NF003764">
    <property type="entry name" value="PRK05355.1"/>
    <property type="match status" value="1"/>
</dbReference>
<dbReference type="NCBIfam" id="TIGR01364">
    <property type="entry name" value="serC_1"/>
    <property type="match status" value="1"/>
</dbReference>
<dbReference type="PANTHER" id="PTHR43247">
    <property type="entry name" value="PHOSPHOSERINE AMINOTRANSFERASE"/>
    <property type="match status" value="1"/>
</dbReference>
<dbReference type="PANTHER" id="PTHR43247:SF1">
    <property type="entry name" value="PHOSPHOSERINE AMINOTRANSFERASE"/>
    <property type="match status" value="1"/>
</dbReference>
<dbReference type="Pfam" id="PF00266">
    <property type="entry name" value="Aminotran_5"/>
    <property type="match status" value="1"/>
</dbReference>
<dbReference type="PIRSF" id="PIRSF000525">
    <property type="entry name" value="SerC"/>
    <property type="match status" value="1"/>
</dbReference>
<dbReference type="SUPFAM" id="SSF53383">
    <property type="entry name" value="PLP-dependent transferases"/>
    <property type="match status" value="1"/>
</dbReference>
<sequence>MPTFTHRIYNFNAGPAMLPTEVMEEAKSEFLNFRGTGMSVMEMSHREKHFQSILDESISDLRELLNLPSRYAVVYFPGGATLQFSAIPFNYLSSGDSCDFALTGVWAKKAFEEAKKFYPNVKSIFNGADSKYMELPTITDESVNDGAKYMYITSNNTIYGTRYKTFPKLKKAPLIADMTSELLSRKLPIEDFSVIFAGAQKNIGPSGLTLVIYDKEKLPEVSHPIPNLMNFALMEKNGSLYNTPPTYSIYIAGLVFKYLKRKGGLAVMEETNERKAKKLYDAIDSSSLFYAPVPVPFRSAMNVVFRSHNDGLDSKFLSLAEEQGFAGLKGYREVGGFRASIYNAMPEEGVDALISFMKEFERSNG</sequence>
<organism>
    <name type="scientific">Leptospira biflexa serovar Patoc (strain Patoc 1 / Ames)</name>
    <dbReference type="NCBI Taxonomy" id="355278"/>
    <lineage>
        <taxon>Bacteria</taxon>
        <taxon>Pseudomonadati</taxon>
        <taxon>Spirochaetota</taxon>
        <taxon>Spirochaetia</taxon>
        <taxon>Leptospirales</taxon>
        <taxon>Leptospiraceae</taxon>
        <taxon>Leptospira</taxon>
    </lineage>
</organism>
<reference key="1">
    <citation type="journal article" date="2008" name="PLoS ONE">
        <title>Genome sequence of the saprophyte Leptospira biflexa provides insights into the evolution of Leptospira and the pathogenesis of leptospirosis.</title>
        <authorList>
            <person name="Picardeau M."/>
            <person name="Bulach D.M."/>
            <person name="Bouchier C."/>
            <person name="Zuerner R.L."/>
            <person name="Zidane N."/>
            <person name="Wilson P.J."/>
            <person name="Creno S."/>
            <person name="Kuczek E.S."/>
            <person name="Bommezzadri S."/>
            <person name="Davis J.C."/>
            <person name="McGrath A."/>
            <person name="Johnson M.J."/>
            <person name="Boursaux-Eude C."/>
            <person name="Seemann T."/>
            <person name="Rouy Z."/>
            <person name="Coppel R.L."/>
            <person name="Rood J.I."/>
            <person name="Lajus A."/>
            <person name="Davies J.K."/>
            <person name="Medigue C."/>
            <person name="Adler B."/>
        </authorList>
    </citation>
    <scope>NUCLEOTIDE SEQUENCE [LARGE SCALE GENOMIC DNA]</scope>
    <source>
        <strain>Patoc 1 / Ames</strain>
    </source>
</reference>
<protein>
    <recommendedName>
        <fullName evidence="1">Phosphoserine aminotransferase</fullName>
        <ecNumber evidence="1">2.6.1.52</ecNumber>
    </recommendedName>
    <alternativeName>
        <fullName evidence="1">Phosphohydroxythreonine aminotransferase</fullName>
        <shortName evidence="1">PSAT</shortName>
    </alternativeName>
</protein>
<gene>
    <name evidence="1" type="primary">serC</name>
    <name type="ordered locus">LBF_2298</name>
</gene>
<keyword id="KW-0028">Amino-acid biosynthesis</keyword>
<keyword id="KW-0032">Aminotransferase</keyword>
<keyword id="KW-0963">Cytoplasm</keyword>
<keyword id="KW-0663">Pyridoxal phosphate</keyword>
<keyword id="KW-0664">Pyridoxine biosynthesis</keyword>
<keyword id="KW-0718">Serine biosynthesis</keyword>
<keyword id="KW-0808">Transferase</keyword>